<evidence type="ECO:0000250" key="1">
    <source>
        <dbReference type="UniProtKB" id="Q9BYK8"/>
    </source>
</evidence>
<evidence type="ECO:0000255" key="2"/>
<evidence type="ECO:0000255" key="3">
    <source>
        <dbReference type="PROSITE-ProRule" id="PRU00560"/>
    </source>
</evidence>
<evidence type="ECO:0000255" key="4">
    <source>
        <dbReference type="PROSITE-ProRule" id="PRU00723"/>
    </source>
</evidence>
<evidence type="ECO:0000256" key="5">
    <source>
        <dbReference type="SAM" id="MobiDB-lite"/>
    </source>
</evidence>
<evidence type="ECO:0000269" key="6">
    <source>
    </source>
</evidence>
<evidence type="ECO:0000269" key="7">
    <source>
    </source>
</evidence>
<evidence type="ECO:0000305" key="8"/>
<evidence type="ECO:0007744" key="9">
    <source>
    </source>
</evidence>
<keyword id="KW-0010">Activator</keyword>
<keyword id="KW-0067">ATP-binding</keyword>
<keyword id="KW-0963">Cytoplasm</keyword>
<keyword id="KW-0238">DNA-binding</keyword>
<keyword id="KW-0269">Exonuclease</keyword>
<keyword id="KW-0347">Helicase</keyword>
<keyword id="KW-0378">Hydrolase</keyword>
<keyword id="KW-0479">Metal-binding</keyword>
<keyword id="KW-0488">Methylation</keyword>
<keyword id="KW-0540">Nuclease</keyword>
<keyword id="KW-0547">Nucleotide-binding</keyword>
<keyword id="KW-1185">Reference proteome</keyword>
<keyword id="KW-0677">Repeat</keyword>
<keyword id="KW-0694">RNA-binding</keyword>
<keyword id="KW-0804">Transcription</keyword>
<keyword id="KW-0805">Transcription regulation</keyword>
<keyword id="KW-0862">Zinc</keyword>
<keyword id="KW-0863">Zinc-finger</keyword>
<organism>
    <name type="scientific">Mus musculus</name>
    <name type="common">Mouse</name>
    <dbReference type="NCBI Taxonomy" id="10090"/>
    <lineage>
        <taxon>Eukaryota</taxon>
        <taxon>Metazoa</taxon>
        <taxon>Chordata</taxon>
        <taxon>Craniata</taxon>
        <taxon>Vertebrata</taxon>
        <taxon>Euteleostomi</taxon>
        <taxon>Mammalia</taxon>
        <taxon>Eutheria</taxon>
        <taxon>Euarchontoglires</taxon>
        <taxon>Glires</taxon>
        <taxon>Rodentia</taxon>
        <taxon>Myomorpha</taxon>
        <taxon>Muroidea</taxon>
        <taxon>Muridae</taxon>
        <taxon>Murinae</taxon>
        <taxon>Mus</taxon>
        <taxon>Mus</taxon>
    </lineage>
</organism>
<protein>
    <recommendedName>
        <fullName>3'-5' exoribonuclease HELZ2</fullName>
        <ecNumber evidence="1">3.1.13.1</ecNumber>
    </recommendedName>
    <alternativeName>
        <fullName>ATP-dependent RNA helicase PRIC285</fullName>
        <ecNumber evidence="1">3.6.4.13</ecNumber>
    </alternativeName>
    <alternativeName>
        <fullName>PPAR-gamma DNA-binding domain-interacting protein 1</fullName>
        <shortName>PDIP1</shortName>
        <shortName>PPAR-gamma DBD-interacting protein 1</shortName>
    </alternativeName>
</protein>
<name>HELZ2_MOUSE</name>
<accession>E9QAM5</accession>
<accession>B9A0U1</accession>
<reference key="1">
    <citation type="submission" date="2005-02" db="EMBL/GenBank/DDBJ databases">
        <title>Molecular cloning and characterization of the mouse PDIP1.</title>
        <authorList>
            <person name="Yoshino S."/>
            <person name="Satoh T."/>
            <person name="Tomaru T."/>
            <person name="Ishizuka T."/>
            <person name="Hashimoto K."/>
            <person name="Monden T."/>
            <person name="Yamada M."/>
            <person name="Mori M."/>
        </authorList>
    </citation>
    <scope>NUCLEOTIDE SEQUENCE [MRNA]</scope>
</reference>
<reference key="2">
    <citation type="journal article" date="2009" name="PLoS Biol.">
        <title>Lineage-specific biology revealed by a finished genome assembly of the mouse.</title>
        <authorList>
            <person name="Church D.M."/>
            <person name="Goodstadt L."/>
            <person name="Hillier L.W."/>
            <person name="Zody M.C."/>
            <person name="Goldstein S."/>
            <person name="She X."/>
            <person name="Bult C.J."/>
            <person name="Agarwala R."/>
            <person name="Cherry J.L."/>
            <person name="DiCuccio M."/>
            <person name="Hlavina W."/>
            <person name="Kapustin Y."/>
            <person name="Meric P."/>
            <person name="Maglott D."/>
            <person name="Birtle Z."/>
            <person name="Marques A.C."/>
            <person name="Graves T."/>
            <person name="Zhou S."/>
            <person name="Teague B."/>
            <person name="Potamousis K."/>
            <person name="Churas C."/>
            <person name="Place M."/>
            <person name="Herschleb J."/>
            <person name="Runnheim R."/>
            <person name="Forrest D."/>
            <person name="Amos-Landgraf J."/>
            <person name="Schwartz D.C."/>
            <person name="Cheng Z."/>
            <person name="Lindblad-Toh K."/>
            <person name="Eichler E.E."/>
            <person name="Ponting C.P."/>
        </authorList>
    </citation>
    <scope>NUCLEOTIDE SEQUENCE [LARGE SCALE GENOMIC DNA]</scope>
    <source>
        <strain>C57BL/6J</strain>
    </source>
</reference>
<reference key="3">
    <citation type="journal article" date="2006" name="Endocrinology">
        <title>Isolation and characterization of a transcriptional cofactor and its novel isoform that bind the DNA-binding domain of peroxisome proliferator-activated receptor gamma.</title>
        <authorList>
            <person name="Tomaru T."/>
            <person name="Satoh T."/>
            <person name="Yoshino S."/>
            <person name="Ishizuka T."/>
            <person name="Hashimoto K."/>
            <person name="Monden T."/>
            <person name="Yamada M."/>
            <person name="Mori M."/>
        </authorList>
    </citation>
    <scope>DEVELOPMENTAL STAGE</scope>
</reference>
<reference key="4">
    <citation type="journal article" date="2010" name="Cell">
        <title>A tissue-specific atlas of mouse protein phosphorylation and expression.</title>
        <authorList>
            <person name="Huttlin E.L."/>
            <person name="Jedrychowski M.P."/>
            <person name="Elias J.E."/>
            <person name="Goswami T."/>
            <person name="Rad R."/>
            <person name="Beausoleil S.A."/>
            <person name="Villen J."/>
            <person name="Haas W."/>
            <person name="Sowa M.E."/>
            <person name="Gygi S.P."/>
        </authorList>
    </citation>
    <scope>IDENTIFICATION BY MASS SPECTROMETRY [LARGE SCALE ANALYSIS]</scope>
    <source>
        <tissue>Liver</tissue>
        <tissue>Lung</tissue>
        <tissue>Pancreas</tissue>
        <tissue>Spleen</tissue>
    </source>
</reference>
<reference key="5">
    <citation type="journal article" date="2013" name="Mol. Endocrinol.">
        <title>THRAP3 interacts with HELZ2 and plays a novel role in adipocyte differentiation.</title>
        <authorList>
            <person name="Katano-Toki A."/>
            <person name="Satoh T."/>
            <person name="Tomaru T."/>
            <person name="Yoshino S."/>
            <person name="Ishizuka T."/>
            <person name="Ishii S."/>
            <person name="Ozawa A."/>
            <person name="Shibusawa N."/>
            <person name="Tsuchiya T."/>
            <person name="Saito T."/>
            <person name="Shimizu H."/>
            <person name="Hashimoto K."/>
            <person name="Okada S."/>
            <person name="Yamada M."/>
            <person name="Mori M."/>
        </authorList>
    </citation>
    <scope>FUNCTION</scope>
    <scope>INTERACTION WITH PPARG AND THRAP3</scope>
</reference>
<reference key="6">
    <citation type="journal article" date="2014" name="Mol. Cell. Proteomics">
        <title>Immunoaffinity enrichment and mass spectrometry analysis of protein methylation.</title>
        <authorList>
            <person name="Guo A."/>
            <person name="Gu H."/>
            <person name="Zhou J."/>
            <person name="Mulhern D."/>
            <person name="Wang Y."/>
            <person name="Lee K.A."/>
            <person name="Yang V."/>
            <person name="Aguiar M."/>
            <person name="Kornhauser J."/>
            <person name="Jia X."/>
            <person name="Ren J."/>
            <person name="Beausoleil S.A."/>
            <person name="Silva J.C."/>
            <person name="Vemulapalli V."/>
            <person name="Bedford M.T."/>
            <person name="Comb M.J."/>
        </authorList>
    </citation>
    <scope>METHYLATION [LARGE SCALE ANALYSIS] AT ARG-2381</scope>
    <scope>IDENTIFICATION BY MASS SPECTROMETRY [LARGE SCALE ANALYSIS]</scope>
    <source>
        <tissue>Embryo</tissue>
    </source>
</reference>
<dbReference type="EC" id="3.1.13.1" evidence="1"/>
<dbReference type="EC" id="3.6.4.13" evidence="1"/>
<dbReference type="EMBL" id="AB201714">
    <property type="protein sequence ID" value="BAH20441.1"/>
    <property type="molecule type" value="mRNA"/>
</dbReference>
<dbReference type="EMBL" id="AL845506">
    <property type="status" value="NOT_ANNOTATED_CDS"/>
    <property type="molecule type" value="Genomic_DNA"/>
</dbReference>
<dbReference type="CCDS" id="CCDS38380.1"/>
<dbReference type="RefSeq" id="NP_898985.2">
    <property type="nucleotide sequence ID" value="NM_183162.2"/>
</dbReference>
<dbReference type="RefSeq" id="XP_006500662.1">
    <property type="nucleotide sequence ID" value="XM_006500599.3"/>
</dbReference>
<dbReference type="SMR" id="E9QAM5"/>
<dbReference type="BioGRID" id="230806">
    <property type="interactions" value="16"/>
</dbReference>
<dbReference type="FunCoup" id="E9QAM5">
    <property type="interactions" value="669"/>
</dbReference>
<dbReference type="IntAct" id="E9QAM5">
    <property type="interactions" value="1"/>
</dbReference>
<dbReference type="MINT" id="E9QAM5"/>
<dbReference type="STRING" id="10090.ENSMUSP00000104459"/>
<dbReference type="GlyGen" id="E9QAM5">
    <property type="glycosylation" value="3 sites"/>
</dbReference>
<dbReference type="iPTMnet" id="E9QAM5"/>
<dbReference type="PhosphoSitePlus" id="E9QAM5"/>
<dbReference type="SwissPalm" id="E9QAM5"/>
<dbReference type="PaxDb" id="10090-ENSMUSP00000091756"/>
<dbReference type="ProteomicsDB" id="269582"/>
<dbReference type="Pumba" id="E9QAM5"/>
<dbReference type="Antibodypedia" id="63897">
    <property type="antibodies" value="46 antibodies from 17 providers"/>
</dbReference>
<dbReference type="Ensembl" id="ENSMUST00000108831.8">
    <property type="protein sequence ID" value="ENSMUSP00000104459.2"/>
    <property type="gene ID" value="ENSMUSG00000027580.18"/>
</dbReference>
<dbReference type="GeneID" id="229003"/>
<dbReference type="KEGG" id="mmu:229003"/>
<dbReference type="UCSC" id="uc008oln.1">
    <property type="organism name" value="mouse"/>
</dbReference>
<dbReference type="AGR" id="MGI:2385169"/>
<dbReference type="CTD" id="85441"/>
<dbReference type="MGI" id="MGI:2385169">
    <property type="gene designation" value="Helz2"/>
</dbReference>
<dbReference type="VEuPathDB" id="HostDB:ENSMUSG00000027580"/>
<dbReference type="eggNOG" id="KOG1804">
    <property type="taxonomic scope" value="Eukaryota"/>
</dbReference>
<dbReference type="eggNOG" id="KOG2102">
    <property type="taxonomic scope" value="Eukaryota"/>
</dbReference>
<dbReference type="GeneTree" id="ENSGT00940000160694"/>
<dbReference type="InParanoid" id="E9QAM5"/>
<dbReference type="OrthoDB" id="2285229at2759"/>
<dbReference type="Reactome" id="R-MMU-400206">
    <property type="pathway name" value="Regulation of lipid metabolism by PPARalpha"/>
</dbReference>
<dbReference type="Reactome" id="R-MMU-9707564">
    <property type="pathway name" value="Cytoprotection by HMOX1"/>
</dbReference>
<dbReference type="BioGRID-ORCS" id="229003">
    <property type="hits" value="1 hit in 81 CRISPR screens"/>
</dbReference>
<dbReference type="PRO" id="PR:E9QAM5"/>
<dbReference type="Proteomes" id="UP000000589">
    <property type="component" value="Chromosome 2"/>
</dbReference>
<dbReference type="RNAct" id="E9QAM5">
    <property type="molecule type" value="Protein"/>
</dbReference>
<dbReference type="Bgee" id="ENSMUSG00000027580">
    <property type="expression patterns" value="Expressed in lymph node and 184 other cell types or tissues"/>
</dbReference>
<dbReference type="ExpressionAtlas" id="E9QAM5">
    <property type="expression patterns" value="baseline and differential"/>
</dbReference>
<dbReference type="GO" id="GO:0005737">
    <property type="term" value="C:cytoplasm"/>
    <property type="evidence" value="ECO:0000250"/>
    <property type="project" value="UniProtKB"/>
</dbReference>
<dbReference type="GO" id="GO:0005654">
    <property type="term" value="C:nucleoplasm"/>
    <property type="evidence" value="ECO:0000304"/>
    <property type="project" value="Reactome"/>
</dbReference>
<dbReference type="GO" id="GO:0005524">
    <property type="term" value="F:ATP binding"/>
    <property type="evidence" value="ECO:0007669"/>
    <property type="project" value="UniProtKB-KW"/>
</dbReference>
<dbReference type="GO" id="GO:0016887">
    <property type="term" value="F:ATP hydrolysis activity"/>
    <property type="evidence" value="ECO:0007669"/>
    <property type="project" value="InterPro"/>
</dbReference>
<dbReference type="GO" id="GO:0003677">
    <property type="term" value="F:DNA binding"/>
    <property type="evidence" value="ECO:0007669"/>
    <property type="project" value="UniProtKB-KW"/>
</dbReference>
<dbReference type="GO" id="GO:0008859">
    <property type="term" value="F:exoribonuclease II activity"/>
    <property type="evidence" value="ECO:0000250"/>
    <property type="project" value="UniProtKB"/>
</dbReference>
<dbReference type="GO" id="GO:0003723">
    <property type="term" value="F:RNA binding"/>
    <property type="evidence" value="ECO:0007669"/>
    <property type="project" value="UniProtKB-KW"/>
</dbReference>
<dbReference type="GO" id="GO:0003724">
    <property type="term" value="F:RNA helicase activity"/>
    <property type="evidence" value="ECO:0000250"/>
    <property type="project" value="UniProtKB"/>
</dbReference>
<dbReference type="GO" id="GO:0008270">
    <property type="term" value="F:zinc ion binding"/>
    <property type="evidence" value="ECO:0007669"/>
    <property type="project" value="UniProtKB-KW"/>
</dbReference>
<dbReference type="CDD" id="cd18040">
    <property type="entry name" value="DEXXc_HELZ2-C"/>
    <property type="match status" value="1"/>
</dbReference>
<dbReference type="CDD" id="cd18808">
    <property type="entry name" value="SF1_C_Upf1"/>
    <property type="match status" value="2"/>
</dbReference>
<dbReference type="FunFam" id="3.40.50.300:FF:001803">
    <property type="entry name" value="Helicase with zinc finger 2"/>
    <property type="match status" value="1"/>
</dbReference>
<dbReference type="FunFam" id="3.40.50.300:FF:001313">
    <property type="entry name" value="Helicase with zinc finger domain 2"/>
    <property type="match status" value="1"/>
</dbReference>
<dbReference type="FunFam" id="3.40.50.300:FF:001373">
    <property type="entry name" value="Helicase with zinc finger domain 2"/>
    <property type="match status" value="1"/>
</dbReference>
<dbReference type="FunFam" id="3.40.50.300:FF:001413">
    <property type="entry name" value="Helicase with zinc finger domain 2"/>
    <property type="match status" value="1"/>
</dbReference>
<dbReference type="Gene3D" id="3.40.50.300">
    <property type="entry name" value="P-loop containing nucleotide triphosphate hydrolases"/>
    <property type="match status" value="4"/>
</dbReference>
<dbReference type="InterPro" id="IPR003593">
    <property type="entry name" value="AAA+_ATPase"/>
</dbReference>
<dbReference type="InterPro" id="IPR050534">
    <property type="entry name" value="Coronavir_polyprotein_1ab"/>
</dbReference>
<dbReference type="InterPro" id="IPR041679">
    <property type="entry name" value="DNA2/NAM7-like_C"/>
</dbReference>
<dbReference type="InterPro" id="IPR041677">
    <property type="entry name" value="DNA2/NAM7_AAA_11"/>
</dbReference>
<dbReference type="InterPro" id="IPR012340">
    <property type="entry name" value="NA-bd_OB-fold"/>
</dbReference>
<dbReference type="InterPro" id="IPR056787">
    <property type="entry name" value="OB_HELZ2"/>
</dbReference>
<dbReference type="InterPro" id="IPR027417">
    <property type="entry name" value="P-loop_NTPase"/>
</dbReference>
<dbReference type="InterPro" id="IPR001900">
    <property type="entry name" value="RNase_II/R"/>
</dbReference>
<dbReference type="InterPro" id="IPR047187">
    <property type="entry name" value="SF1_C_Upf1"/>
</dbReference>
<dbReference type="InterPro" id="IPR036236">
    <property type="entry name" value="Znf_C2H2_sf"/>
</dbReference>
<dbReference type="PANTHER" id="PTHR43788">
    <property type="entry name" value="DNA2/NAM7 HELICASE FAMILY MEMBER"/>
    <property type="match status" value="1"/>
</dbReference>
<dbReference type="PANTHER" id="PTHR43788:SF16">
    <property type="entry name" value="HELICASE WITH ZINC FINGER 2"/>
    <property type="match status" value="1"/>
</dbReference>
<dbReference type="Pfam" id="PF13086">
    <property type="entry name" value="AAA_11"/>
    <property type="match status" value="3"/>
</dbReference>
<dbReference type="Pfam" id="PF13087">
    <property type="entry name" value="AAA_12"/>
    <property type="match status" value="2"/>
</dbReference>
<dbReference type="Pfam" id="PF25049">
    <property type="entry name" value="OB_HELZ2"/>
    <property type="match status" value="1"/>
</dbReference>
<dbReference type="Pfam" id="PF00773">
    <property type="entry name" value="RNB"/>
    <property type="match status" value="1"/>
</dbReference>
<dbReference type="SMART" id="SM00382">
    <property type="entry name" value="AAA"/>
    <property type="match status" value="2"/>
</dbReference>
<dbReference type="SMART" id="SM00955">
    <property type="entry name" value="RNB"/>
    <property type="match status" value="1"/>
</dbReference>
<dbReference type="SUPFAM" id="SSF57667">
    <property type="entry name" value="beta-beta-alpha zinc fingers"/>
    <property type="match status" value="1"/>
</dbReference>
<dbReference type="SUPFAM" id="SSF50249">
    <property type="entry name" value="Nucleic acid-binding proteins"/>
    <property type="match status" value="2"/>
</dbReference>
<dbReference type="SUPFAM" id="SSF52540">
    <property type="entry name" value="P-loop containing nucleoside triphosphate hydrolases"/>
    <property type="match status" value="2"/>
</dbReference>
<dbReference type="PROSITE" id="PS00028">
    <property type="entry name" value="ZINC_FINGER_C2H2_1"/>
    <property type="match status" value="2"/>
</dbReference>
<feature type="chain" id="PRO_0000424355" description="3'-5' exoribonuclease HELZ2">
    <location>
        <begin position="1"/>
        <end position="2947"/>
    </location>
</feature>
<feature type="domain" description="UvrD-like helicase ATP-binding" evidence="3">
    <location>
        <begin position="769"/>
        <end position="1317"/>
    </location>
</feature>
<feature type="domain" description="UvrD-like helicase ATP-binding 2" evidence="3">
    <location>
        <begin position="2449"/>
        <end position="2726"/>
    </location>
</feature>
<feature type="zinc finger region" description="C3H1-type 1" evidence="4">
    <location>
        <begin position="85"/>
        <end position="114"/>
    </location>
</feature>
<feature type="zinc finger region" description="C2H2-type">
    <location>
        <begin position="167"/>
        <end position="187"/>
    </location>
</feature>
<feature type="zinc finger region" description="C3H1-type 2" evidence="4">
    <location>
        <begin position="221"/>
        <end position="245"/>
    </location>
</feature>
<feature type="zinc finger region" description="C2H2-type; atypical">
    <location>
        <begin position="289"/>
        <end position="311"/>
    </location>
</feature>
<feature type="region of interest" description="Interaction with THRAP3" evidence="1">
    <location>
        <begin position="809"/>
        <end position="1290"/>
    </location>
</feature>
<feature type="region of interest" description="Disordered" evidence="5">
    <location>
        <begin position="1260"/>
        <end position="1292"/>
    </location>
</feature>
<feature type="region of interest" description="Interaction with THRAP3" evidence="1">
    <location>
        <begin position="2413"/>
        <end position="2947"/>
    </location>
</feature>
<feature type="short sequence motif" description="DEAA box">
    <location>
        <begin position="913"/>
        <end position="916"/>
    </location>
</feature>
<feature type="short sequence motif" description="LXXLL motif 1">
    <location>
        <begin position="1306"/>
        <end position="1310"/>
    </location>
</feature>
<feature type="short sequence motif" description="LXXLL motif 2">
    <location>
        <begin position="1348"/>
        <end position="1352"/>
    </location>
</feature>
<feature type="short sequence motif" description="LXXLL motif 3">
    <location>
        <begin position="1403"/>
        <end position="1407"/>
    </location>
</feature>
<feature type="short sequence motif" description="LXXLL motif 4">
    <location>
        <begin position="2240"/>
        <end position="2244"/>
    </location>
</feature>
<feature type="short sequence motif" description="LXXLL motif 5">
    <location>
        <begin position="2525"/>
        <end position="2529"/>
    </location>
</feature>
<feature type="binding site" evidence="3">
    <location>
        <begin position="790"/>
        <end position="797"/>
    </location>
    <ligand>
        <name>ATP</name>
        <dbReference type="ChEBI" id="CHEBI:30616"/>
    </ligand>
</feature>
<feature type="binding site" evidence="2">
    <location>
        <begin position="2470"/>
        <end position="2477"/>
    </location>
    <ligand>
        <name>ATP</name>
        <dbReference type="ChEBI" id="CHEBI:30616"/>
    </ligand>
</feature>
<feature type="modified residue" description="Omega-N-methylarginine" evidence="9">
    <location>
        <position position="2381"/>
    </location>
</feature>
<feature type="sequence conflict" description="In Ref. 1; BAH20441." evidence="8" ref="1">
    <original>E</original>
    <variation>G</variation>
    <location>
        <position position="348"/>
    </location>
</feature>
<feature type="sequence conflict" description="In Ref. 1; BAH20441." evidence="8" ref="1">
    <original>R</original>
    <variation>C</variation>
    <location>
        <position position="407"/>
    </location>
</feature>
<feature type="sequence conflict" description="In Ref. 1; BAH20441." evidence="8" ref="1">
    <original>F</original>
    <variation>S</variation>
    <location>
        <position position="472"/>
    </location>
</feature>
<feature type="sequence conflict" description="In Ref. 1; BAH20441." evidence="8" ref="1">
    <original>T</original>
    <variation>A</variation>
    <location>
        <position position="946"/>
    </location>
</feature>
<feature type="sequence conflict" description="In Ref. 1; BAH20441." evidence="8" ref="1">
    <original>A</original>
    <variation>T</variation>
    <location>
        <position position="1301"/>
    </location>
</feature>
<feature type="sequence conflict" description="In Ref. 1; BAH20441." evidence="8" ref="1">
    <original>V</original>
    <variation>A</variation>
    <location>
        <position position="1316"/>
    </location>
</feature>
<feature type="sequence conflict" description="In Ref. 1; BAH20441." evidence="8" ref="1">
    <original>D</original>
    <variation>E</variation>
    <location>
        <position position="2337"/>
    </location>
</feature>
<feature type="sequence conflict" description="In Ref. 1; BAH20441." evidence="8" ref="1">
    <original>S</original>
    <variation>C</variation>
    <location>
        <position position="2639"/>
    </location>
</feature>
<comment type="function">
    <text evidence="1 7">Can degrade highly structured RNAs through its concerted ATP-dependent RNA helicase and 3' to 5' exoribonuclease activities (By similarity). Shows a strong preference for pyrimidine over purine residues for its nuclease activity (By similarity). Acts as a transcriptional coactivator for a number of nuclear receptors including PPARA, PPARG, THRA, THRB and RXRA (PubMed:23525231).</text>
</comment>
<comment type="catalytic activity">
    <reaction evidence="1">
        <text>Exonucleolytic cleavage in the 3'- to 5'-direction to yield nucleoside 5'-phosphates.</text>
        <dbReference type="EC" id="3.1.13.1"/>
    </reaction>
</comment>
<comment type="catalytic activity">
    <reaction evidence="1">
        <text>ATP + H2O = ADP + phosphate + H(+)</text>
        <dbReference type="Rhea" id="RHEA:13065"/>
        <dbReference type="ChEBI" id="CHEBI:15377"/>
        <dbReference type="ChEBI" id="CHEBI:15378"/>
        <dbReference type="ChEBI" id="CHEBI:30616"/>
        <dbReference type="ChEBI" id="CHEBI:43474"/>
        <dbReference type="ChEBI" id="CHEBI:456216"/>
        <dbReference type="EC" id="3.6.4.13"/>
    </reaction>
</comment>
<comment type="subunit">
    <text evidence="7">Interacts with PPARA (via DNA-binding domain) and PPARG; the interaction stimulates the transcriptional activity of PPARA and PPARG. Interacts with THRAP3; the interaction is direct and HELZ2 and THRAP3 synergistically enhance the transcriptional activity of PPARG. It is probably part of the peroxisome proliferator activated receptor alpha interacting complex (PRIC).</text>
</comment>
<comment type="subcellular location">
    <subcellularLocation>
        <location evidence="1">Cytoplasm</location>
    </subcellularLocation>
</comment>
<comment type="developmental stage">
    <text evidence="6">In 3T3-L1 cell line, highly expressed before differentiation with a slight decreased after the induction of adipocyte differentiation.</text>
</comment>
<comment type="domain">
    <text evidence="1">Contains 5 Leu-Xaa-Xaa-Leu-Leu (LXXLL) motifs. These motifs are not required for interaction with PPARG (By similarity).</text>
</comment>
<comment type="similarity">
    <text evidence="8">Belongs to the DNA2/NAM7 helicase family.</text>
</comment>
<sequence length="2947" mass="331563">MASVGCSLRSASTSATNGPSLAGLCAKVDLYLGCSRCTQCLNESTYILREVEHTCPREILLARFKQAAESKIWRKVGRRPSFPTPMRYQVCHYYRPGLGCRRHWNRCTFARSPEEALVWTFELKNNLPRLKLKEAVQGTRAPDRLQTPADTIRAEFGGHFQLLCAICFTCCPPCLCPVDPRGHCPKHQICPTLLIHVIVEGLKRQFVEVRPLPQRRHPLNYCMYVGRGVPCRHGASRCEYAHSAVEMAVWKAEQLDGLQRGDLLTYPLFGENKWKASPNPNPPVTKLYCHACLVTCNSQEAFENHCSSLEHAQMVAFDQAVPWKHRAPPMGLSKFDLCPRPDLCEHGEVCIKAHSKQELQEWVQRAQDMELREQAAWQDGLVPYQARLLAEYQRSSKEVSVMAETIRGVSVTCHPPPVHQAQEKIQHQWVFTIHSEDPLLHVALLNQEPGAAFSLVAPSLPPHQLYAQGKHFCVQSSPAQYKVGVLVQAVAFGSFEQWVVFDFGRRPVLLQKLKLQLGQTHSQGLNGKPAPSHPQELECWHTGNRHVVLEVDWTPEQEALMAKYKLPSLALEFNQIVPDWGPISRSNYRQRMHKFLYEEEAAQQQLVAKLAMKGQVSLKTALETPALGMLFAPPGALYAKVPFHSSLLPDTDQGFLLSRAVSTALVAPVPAPNSTVYQVRLEARASSDHALWLLLPARCCMALGLQAQDSPILEVQFQIDPMTFRFWHQAVDALLEEHLVVPDLPACTLPHPWPTPPSFRGNHKQKLAVGLIAGRRPEGTKHIPPLLIYGPFGTGKTYTLAMAALEVVQQPHTKVLICTHTNSAADIYIREYFHDYVSSGHPEATPLRVMYADRPPRQTDPTTLQYCCLTEDRQAFRPPTGPELVHHRLVVTTTSQARELQVPAGFFSHIFIDEAAQMLECEALIPLSYALSLTRVVLAGDHMQVTPRLFSVPRDKSARHTLLHRLFLYYQQEAHKIAQQSRIIFHENYRSTAAIINFVSHHFYLAKGNPIQASGKVPRHPQHYPLMFCHVAGSPEQDMSMTSWLNSAEVTQVVEKVREIYNTWPHCWGPREQRHICAVSHGAQVSALRQELRRRNLGEVSVGSFEILPGREFRVVVLSSVHNRNSLLSPGAPTSEFFTEPRVLNTVMTRAQSQLVAVGDAVALCSSGACRNLWRSFIRECIEHHSAFPEELSLEQIEQGVAQRQNWASLTLKARGPETEQKSMAQGPQRLIAEGTMVTVKAETRAEAAAKAQTAAVAAEDTASGNSASRDAAAEVSTLEGGMSEEDSESDFWPSDWELNADDAILKELLDESQQVTVTVREDGLLDTVVCSAPQKAREYTNLPSSVLWKFLRSNSKQFRRCSFLQETFERALATPLDDMASSPIQVRGRLNCGMAFTGDEVLVQILGPAGDDRCVPGSLQGRVMGVLKRRRHELAFVCRMDEWDPRIMIPINGSVTKIFVAEMKDPQQVPIHRLIQGQVQRVRHETLKPEDRSTRLFWVRIVLWRERFYYPLGIVLEVLPKAITWEQGLYILDLEHGLKAHTPDPASVSKALQRYRSELNTAAGHREDYRHFLTFTVDPQGACNLDDALSVRDLGPVYEVAVHIADVASLVPKDGALDVEARQQGTVFYAPNREPVLMLPASLCQDALSLLPGQDRLAISLFLTMEKGGGQIKSLRFAPSIIRSDRQLSYEEAEELIKRHPGAGLELPAHLDSVEACVVAACYFSWMLRRQRLSAACYYEPPDEDSVLGFRTAHIMVQEYMIQFNSHVAEFLVSNKHTQTLTPLRWQPTPSRQQLDSVFKKYRGLVPLSLHLCHHSNTDYTPNKQLHLLTSLWKQVQLAAGTQDYSQMVDLIAADDMHPSLAPACLDLRRALGRSVFGRSSQGKQQPAVHHSLQVDWYTWATSPIRRYLDVVLQRLILLALGHRGSTYSNRDIDGLCLDFSRQYASAQSYQRRAYSLHLAIQLKSQPQNKLGFVVDVEMGARCFKVLFPINRETLPDPCPIHYHSLQLAEHPQELVSQTGVRLVWRRRMYSVQASKLPLPLLGTSLDPHTQTVDAALWMKLLMLLKEQRWPEIAALIQEQDKRFHPREKVKIHQSRCGHFVEVVYELGSGDTLQVQLGSSLQRGFLAPTLKLWTVVPGFSLCLEHMERPGDCFSSHVHQALQDQYLQVGEYSGAWGPRCALESLTNAVTENDSIVLHDVHISWDTSQGQLQGTFQLEAAFLQEKCINIHFGCCYLCIRLEGLPLPLDSSLPGPSGLGPFLNIDPNTYTWVAHGLSGDWDHELAGGDWDQENVDDRQEAPKQVYFLIHHMTMEKVPEEVLRPSARFTVEVLSKQLPDLRKEEAVRQLKTASPLVISIALGLPIPEIRWPISGPRRLVSELRWPIPGPRRPVSEPHRPMSGPCGPISEPCRSIPEPCRGNWPRQHSFHKASTSRFLERQNYNIPAGHHKLNQSQDRAVRSALQKQFTVIQGPPGTGKTVVGFHIVYWFHRSNQEQMPTDSSPSGEEQLGGPCVLYCGPSNKSVDVLGGLLLRRKTEMKPLRVYGEQAEATEFPLPGVSNRSLFGKTSQEGRPNQSLRSITLHHRIRQAPNPYAAEIRKFDAQLREGKIFSKEDLRVYRRVLGKARKHELERHSVILCTCSCAASKSLKILNVRQILIDEAGMATEPETLIPLVCFSKTVEKVVLLGDHKQLRPVVKSEQLQSLGMDRSLFERYHRDAIMLDTQYRMHKDICSFPSVEFYGGKLKTWSDLRRLPSILGHTGKPSCSVIFGSVQGHEQKLLVSTEDGNENSRANPEEVTQVVRIIKQLTLDRTVDPKDIAVLTPYNAQAAAISRGLMQRGVTGVTVTSITKSQGSEWRYVIVSTVRTCPRSDVDQRPTKSWLKKFLGFVVDPHQVNVAITRAQEALCIIGDHLLLRCCPLWHRLLDFCEAQHSLVSAEKVRVQRKSALSS</sequence>
<proteinExistence type="evidence at protein level"/>
<gene>
    <name type="primary">Helz2</name>
</gene>